<accession>Q8LFM2</accession>
<accession>Q9FJF0</accession>
<name>GASAA_ARATH</name>
<gene>
    <name type="primary">GASA10</name>
    <name type="ordered locus">At5g59845</name>
    <name type="ORF">MMN10.7</name>
</gene>
<sequence>MKFPAVKVLIISLLITSSLFILSTADSSPCGGKCNVRCSKAGRQDRCLKYCNICCEKCNYCVPSGTYGNKDECPCYRDMKNSKGTSKCP</sequence>
<keyword id="KW-1015">Disulfide bond</keyword>
<keyword id="KW-0939">Gibberellin signaling pathway</keyword>
<keyword id="KW-1185">Reference proteome</keyword>
<keyword id="KW-0964">Secreted</keyword>
<keyword id="KW-0732">Signal</keyword>
<dbReference type="EMBL" id="AB015475">
    <property type="protein sequence ID" value="BAB08352.1"/>
    <property type="status" value="ALT_SEQ"/>
    <property type="molecule type" value="Genomic_DNA"/>
</dbReference>
<dbReference type="EMBL" id="CP002688">
    <property type="protein sequence ID" value="AED97241.1"/>
    <property type="molecule type" value="Genomic_DNA"/>
</dbReference>
<dbReference type="EMBL" id="AK118173">
    <property type="protein sequence ID" value="BAC42796.1"/>
    <property type="molecule type" value="mRNA"/>
</dbReference>
<dbReference type="EMBL" id="AK228548">
    <property type="protein sequence ID" value="BAF00469.1"/>
    <property type="molecule type" value="mRNA"/>
</dbReference>
<dbReference type="EMBL" id="AY084760">
    <property type="protein sequence ID" value="AAM61329.1"/>
    <property type="molecule type" value="mRNA"/>
</dbReference>
<dbReference type="RefSeq" id="NP_568914.1">
    <property type="nucleotide sequence ID" value="NM_125377.4"/>
</dbReference>
<dbReference type="SMR" id="Q8LFM2"/>
<dbReference type="FunCoup" id="Q8LFM2">
    <property type="interactions" value="208"/>
</dbReference>
<dbReference type="STRING" id="3702.Q8LFM2"/>
<dbReference type="PaxDb" id="3702-AT5G59845.1"/>
<dbReference type="ProteomicsDB" id="230449"/>
<dbReference type="EnsemblPlants" id="AT5G59845.1">
    <property type="protein sequence ID" value="AT5G59845.1"/>
    <property type="gene ID" value="AT5G59845"/>
</dbReference>
<dbReference type="GeneID" id="836106"/>
<dbReference type="Gramene" id="AT5G59845.1">
    <property type="protein sequence ID" value="AT5G59845.1"/>
    <property type="gene ID" value="AT5G59845"/>
</dbReference>
<dbReference type="KEGG" id="ath:AT5G59845"/>
<dbReference type="Araport" id="AT5G59845"/>
<dbReference type="TAIR" id="AT5G59845">
    <property type="gene designation" value="GASA10"/>
</dbReference>
<dbReference type="eggNOG" id="ENOG502S46W">
    <property type="taxonomic scope" value="Eukaryota"/>
</dbReference>
<dbReference type="HOGENOM" id="CLU_142643_5_0_1"/>
<dbReference type="InParanoid" id="Q8LFM2"/>
<dbReference type="OMA" id="ICCEACH"/>
<dbReference type="OrthoDB" id="847210at2759"/>
<dbReference type="PhylomeDB" id="Q8LFM2"/>
<dbReference type="PRO" id="PR:Q8LFM2"/>
<dbReference type="Proteomes" id="UP000006548">
    <property type="component" value="Chromosome 5"/>
</dbReference>
<dbReference type="ExpressionAtlas" id="Q8LFM2">
    <property type="expression patterns" value="baseline and differential"/>
</dbReference>
<dbReference type="GO" id="GO:0005737">
    <property type="term" value="C:cytoplasm"/>
    <property type="evidence" value="ECO:0000314"/>
    <property type="project" value="TAIR"/>
</dbReference>
<dbReference type="GO" id="GO:0005576">
    <property type="term" value="C:extracellular region"/>
    <property type="evidence" value="ECO:0007669"/>
    <property type="project" value="UniProtKB-SubCell"/>
</dbReference>
<dbReference type="GO" id="GO:0009505">
    <property type="term" value="C:plant-type cell wall"/>
    <property type="evidence" value="ECO:0000314"/>
    <property type="project" value="TAIR"/>
</dbReference>
<dbReference type="GO" id="GO:0009740">
    <property type="term" value="P:gibberellic acid mediated signaling pathway"/>
    <property type="evidence" value="ECO:0007669"/>
    <property type="project" value="UniProtKB-KW"/>
</dbReference>
<dbReference type="InterPro" id="IPR003854">
    <property type="entry name" value="GASA"/>
</dbReference>
<dbReference type="PANTHER" id="PTHR23201">
    <property type="entry name" value="EXTENSIN, PROLINE-RICH PROTEIN"/>
    <property type="match status" value="1"/>
</dbReference>
<dbReference type="PANTHER" id="PTHR23201:SF141">
    <property type="entry name" value="GIBBERELLIN-REGULATED PROTEIN 10"/>
    <property type="match status" value="1"/>
</dbReference>
<dbReference type="Pfam" id="PF02704">
    <property type="entry name" value="GASA"/>
    <property type="match status" value="1"/>
</dbReference>
<reference key="1">
    <citation type="journal article" date="1998" name="DNA Res.">
        <title>Structural analysis of Arabidopsis thaliana chromosome 5. VII. Sequence features of the regions of 1,013,767 bp covered by sixteen physically assigned P1 and TAC clones.</title>
        <authorList>
            <person name="Nakamura Y."/>
            <person name="Sato S."/>
            <person name="Asamizu E."/>
            <person name="Kaneko T."/>
            <person name="Kotani H."/>
            <person name="Miyajima N."/>
            <person name="Tabata S."/>
        </authorList>
    </citation>
    <scope>NUCLEOTIDE SEQUENCE [LARGE SCALE GENOMIC DNA]</scope>
    <source>
        <strain>cv. Columbia</strain>
    </source>
</reference>
<reference key="2">
    <citation type="journal article" date="2017" name="Plant J.">
        <title>Araport11: a complete reannotation of the Arabidopsis thaliana reference genome.</title>
        <authorList>
            <person name="Cheng C.Y."/>
            <person name="Krishnakumar V."/>
            <person name="Chan A.P."/>
            <person name="Thibaud-Nissen F."/>
            <person name="Schobel S."/>
            <person name="Town C.D."/>
        </authorList>
    </citation>
    <scope>GENOME REANNOTATION</scope>
    <source>
        <strain>cv. Columbia</strain>
    </source>
</reference>
<reference key="3">
    <citation type="journal article" date="2002" name="Science">
        <title>Functional annotation of a full-length Arabidopsis cDNA collection.</title>
        <authorList>
            <person name="Seki M."/>
            <person name="Narusaka M."/>
            <person name="Kamiya A."/>
            <person name="Ishida J."/>
            <person name="Satou M."/>
            <person name="Sakurai T."/>
            <person name="Nakajima M."/>
            <person name="Enju A."/>
            <person name="Akiyama K."/>
            <person name="Oono Y."/>
            <person name="Muramatsu M."/>
            <person name="Hayashizaki Y."/>
            <person name="Kawai J."/>
            <person name="Carninci P."/>
            <person name="Itoh M."/>
            <person name="Ishii Y."/>
            <person name="Arakawa T."/>
            <person name="Shibata K."/>
            <person name="Shinagawa A."/>
            <person name="Shinozaki K."/>
        </authorList>
    </citation>
    <scope>NUCLEOTIDE SEQUENCE [LARGE SCALE MRNA]</scope>
    <source>
        <strain>cv. Columbia</strain>
    </source>
</reference>
<reference key="4">
    <citation type="submission" date="2006-07" db="EMBL/GenBank/DDBJ databases">
        <title>Large-scale analysis of RIKEN Arabidopsis full-length (RAFL) cDNAs.</title>
        <authorList>
            <person name="Totoki Y."/>
            <person name="Seki M."/>
            <person name="Ishida J."/>
            <person name="Nakajima M."/>
            <person name="Enju A."/>
            <person name="Kamiya A."/>
            <person name="Narusaka M."/>
            <person name="Shin-i T."/>
            <person name="Nakagawa M."/>
            <person name="Sakamoto N."/>
            <person name="Oishi K."/>
            <person name="Kohara Y."/>
            <person name="Kobayashi M."/>
            <person name="Toyoda A."/>
            <person name="Sakaki Y."/>
            <person name="Sakurai T."/>
            <person name="Iida K."/>
            <person name="Akiyama K."/>
            <person name="Satou M."/>
            <person name="Toyoda T."/>
            <person name="Konagaya A."/>
            <person name="Carninci P."/>
            <person name="Kawai J."/>
            <person name="Hayashizaki Y."/>
            <person name="Shinozaki K."/>
        </authorList>
    </citation>
    <scope>NUCLEOTIDE SEQUENCE [LARGE SCALE MRNA]</scope>
    <source>
        <strain>cv. Columbia</strain>
    </source>
</reference>
<reference key="5">
    <citation type="journal article" date="2007" name="Plant Cell Physiol.">
        <title>GASA4, one of the 14-member Arabidopsis GASA family of small polypeptides, regulates flowering and seed development.</title>
        <authorList>
            <person name="Roxrud I."/>
            <person name="Lid S.E."/>
            <person name="Fletcher J.C."/>
            <person name="Schmidt E.D."/>
            <person name="Opsahl-Sorteberg H.G."/>
        </authorList>
    </citation>
    <scope>TISSUE SPECIFICITY</scope>
</reference>
<evidence type="ECO:0000250" key="1"/>
<evidence type="ECO:0000255" key="2"/>
<evidence type="ECO:0000269" key="3">
    <source>
    </source>
</evidence>
<evidence type="ECO:0000305" key="4"/>
<organism>
    <name type="scientific">Arabidopsis thaliana</name>
    <name type="common">Mouse-ear cress</name>
    <dbReference type="NCBI Taxonomy" id="3702"/>
    <lineage>
        <taxon>Eukaryota</taxon>
        <taxon>Viridiplantae</taxon>
        <taxon>Streptophyta</taxon>
        <taxon>Embryophyta</taxon>
        <taxon>Tracheophyta</taxon>
        <taxon>Spermatophyta</taxon>
        <taxon>Magnoliopsida</taxon>
        <taxon>eudicotyledons</taxon>
        <taxon>Gunneridae</taxon>
        <taxon>Pentapetalae</taxon>
        <taxon>rosids</taxon>
        <taxon>malvids</taxon>
        <taxon>Brassicales</taxon>
        <taxon>Brassicaceae</taxon>
        <taxon>Camelineae</taxon>
        <taxon>Arabidopsis</taxon>
    </lineage>
</organism>
<proteinExistence type="evidence at transcript level"/>
<feature type="signal peptide" evidence="2">
    <location>
        <begin position="1"/>
        <end position="25"/>
    </location>
</feature>
<feature type="chain" id="PRO_0000413708" description="Gibberellin-regulated protein 10">
    <location>
        <begin position="26"/>
        <end position="89"/>
    </location>
</feature>
<comment type="function">
    <text evidence="1">Gibberellin-regulated protein that may function in hormonal controlled steps of development such as seed germination, flowering and seed maturation.</text>
</comment>
<comment type="subcellular location">
    <subcellularLocation>
        <location evidence="1">Secreted</location>
    </subcellularLocation>
</comment>
<comment type="tissue specificity">
    <text evidence="3">Expressed in vasculature of rosette leaves and roots, cotyledon and root tips and developing seeds.</text>
</comment>
<comment type="PTM">
    <text evidence="1">Six disulfide bonds may be present.</text>
</comment>
<comment type="similarity">
    <text evidence="4">Belongs to the GASA family.</text>
</comment>
<comment type="sequence caution" evidence="4">
    <conflict type="erroneous gene model prediction">
        <sequence resource="EMBL-CDS" id="BAB08352"/>
    </conflict>
</comment>
<protein>
    <recommendedName>
        <fullName>Gibberellin-regulated protein 10</fullName>
    </recommendedName>
    <alternativeName>
        <fullName>GAST1 protein homolog 10</fullName>
    </alternativeName>
</protein>